<comment type="subcellular location">
    <subcellularLocation>
        <location evidence="1">Bacterial flagellum basal body</location>
    </subcellularLocation>
</comment>
<comment type="similarity">
    <text evidence="1">Belongs to the FliE family.</text>
</comment>
<sequence>MEINSNSSLWHSYNSGYNGNKPHPLSPKGDQVKVSITEDRHYKDVKQPVSPDYVAESFSEAMKNALTSVNDLQVEADELTQKMVFDPNSVDAHQVMIASEKARVALTFTKTIADGVVRAYRELTSLR</sequence>
<evidence type="ECO:0000255" key="1">
    <source>
        <dbReference type="HAMAP-Rule" id="MF_00724"/>
    </source>
</evidence>
<reference key="1">
    <citation type="journal article" date="2004" name="J. Bacteriol.">
        <title>Comparative genomics of two Leptospira interrogans serovars reveals novel insights into physiology and pathogenesis.</title>
        <authorList>
            <person name="Nascimento A.L.T.O."/>
            <person name="Ko A.I."/>
            <person name="Martins E.A.L."/>
            <person name="Monteiro-Vitorello C.B."/>
            <person name="Ho P.L."/>
            <person name="Haake D.A."/>
            <person name="Verjovski-Almeida S."/>
            <person name="Hartskeerl R.A."/>
            <person name="Marques M.V."/>
            <person name="Oliveira M.C."/>
            <person name="Menck C.F.M."/>
            <person name="Leite L.C.C."/>
            <person name="Carrer H."/>
            <person name="Coutinho L.L."/>
            <person name="Degrave W.M."/>
            <person name="Dellagostin O.A."/>
            <person name="El-Dorry H."/>
            <person name="Ferro E.S."/>
            <person name="Ferro M.I.T."/>
            <person name="Furlan L.R."/>
            <person name="Gamberini M."/>
            <person name="Giglioti E.A."/>
            <person name="Goes-Neto A."/>
            <person name="Goldman G.H."/>
            <person name="Goldman M.H.S."/>
            <person name="Harakava R."/>
            <person name="Jeronimo S.M.B."/>
            <person name="Junqueira-de-Azevedo I.L.M."/>
            <person name="Kimura E.T."/>
            <person name="Kuramae E.E."/>
            <person name="Lemos E.G.M."/>
            <person name="Lemos M.V.F."/>
            <person name="Marino C.L."/>
            <person name="Nunes L.R."/>
            <person name="de Oliveira R.C."/>
            <person name="Pereira G.G."/>
            <person name="Reis M.S."/>
            <person name="Schriefer A."/>
            <person name="Siqueira W.J."/>
            <person name="Sommer P."/>
            <person name="Tsai S.M."/>
            <person name="Simpson A.J.G."/>
            <person name="Ferro J.A."/>
            <person name="Camargo L.E.A."/>
            <person name="Kitajima J.P."/>
            <person name="Setubal J.C."/>
            <person name="Van Sluys M.A."/>
        </authorList>
    </citation>
    <scope>NUCLEOTIDE SEQUENCE [LARGE SCALE GENOMIC DNA]</scope>
    <source>
        <strain>Fiocruz L1-130</strain>
    </source>
</reference>
<gene>
    <name evidence="1" type="primary">fliE</name>
    <name type="ordered locus">LIC_10297</name>
</gene>
<organism>
    <name type="scientific">Leptospira interrogans serogroup Icterohaemorrhagiae serovar copenhageni (strain Fiocruz L1-130)</name>
    <dbReference type="NCBI Taxonomy" id="267671"/>
    <lineage>
        <taxon>Bacteria</taxon>
        <taxon>Pseudomonadati</taxon>
        <taxon>Spirochaetota</taxon>
        <taxon>Spirochaetia</taxon>
        <taxon>Leptospirales</taxon>
        <taxon>Leptospiraceae</taxon>
        <taxon>Leptospira</taxon>
    </lineage>
</organism>
<keyword id="KW-0975">Bacterial flagellum</keyword>
<name>FLIE_LEPIC</name>
<accession>Q72VK0</accession>
<proteinExistence type="inferred from homology"/>
<dbReference type="EMBL" id="AE016823">
    <property type="protein sequence ID" value="AAS68924.1"/>
    <property type="molecule type" value="Genomic_DNA"/>
</dbReference>
<dbReference type="RefSeq" id="WP_000405186.1">
    <property type="nucleotide sequence ID" value="NC_005823.1"/>
</dbReference>
<dbReference type="SMR" id="Q72VK0"/>
<dbReference type="GeneID" id="61143652"/>
<dbReference type="KEGG" id="lic:LIC_10297"/>
<dbReference type="HOGENOM" id="CLU_147249_4_0_12"/>
<dbReference type="Proteomes" id="UP000007037">
    <property type="component" value="Chromosome I"/>
</dbReference>
<dbReference type="GO" id="GO:0009425">
    <property type="term" value="C:bacterial-type flagellum basal body"/>
    <property type="evidence" value="ECO:0007669"/>
    <property type="project" value="UniProtKB-SubCell"/>
</dbReference>
<dbReference type="GO" id="GO:0003774">
    <property type="term" value="F:cytoskeletal motor activity"/>
    <property type="evidence" value="ECO:0007669"/>
    <property type="project" value="InterPro"/>
</dbReference>
<dbReference type="GO" id="GO:0005198">
    <property type="term" value="F:structural molecule activity"/>
    <property type="evidence" value="ECO:0007669"/>
    <property type="project" value="InterPro"/>
</dbReference>
<dbReference type="GO" id="GO:0071973">
    <property type="term" value="P:bacterial-type flagellum-dependent cell motility"/>
    <property type="evidence" value="ECO:0007669"/>
    <property type="project" value="InterPro"/>
</dbReference>
<dbReference type="HAMAP" id="MF_00724">
    <property type="entry name" value="FliE"/>
    <property type="match status" value="1"/>
</dbReference>
<dbReference type="InterPro" id="IPR001624">
    <property type="entry name" value="FliE"/>
</dbReference>
<dbReference type="NCBIfam" id="TIGR00205">
    <property type="entry name" value="fliE"/>
    <property type="match status" value="1"/>
</dbReference>
<dbReference type="NCBIfam" id="NF009371">
    <property type="entry name" value="PRK12729.1"/>
    <property type="match status" value="1"/>
</dbReference>
<dbReference type="PANTHER" id="PTHR34653">
    <property type="match status" value="1"/>
</dbReference>
<dbReference type="PANTHER" id="PTHR34653:SF1">
    <property type="entry name" value="FLAGELLAR HOOK-BASAL BODY COMPLEX PROTEIN FLIE"/>
    <property type="match status" value="1"/>
</dbReference>
<dbReference type="Pfam" id="PF02049">
    <property type="entry name" value="FliE"/>
    <property type="match status" value="1"/>
</dbReference>
<dbReference type="PRINTS" id="PR01006">
    <property type="entry name" value="FLGHOOKFLIE"/>
</dbReference>
<protein>
    <recommendedName>
        <fullName evidence="1">Flagellar hook-basal body complex protein FliE</fullName>
    </recommendedName>
</protein>
<feature type="chain" id="PRO_0000105548" description="Flagellar hook-basal body complex protein FliE">
    <location>
        <begin position="1"/>
        <end position="127"/>
    </location>
</feature>